<reference key="1">
    <citation type="journal article" date="2003" name="Nature">
        <title>The genome sequence of Bacillus anthracis Ames and comparison to closely related bacteria.</title>
        <authorList>
            <person name="Read T.D."/>
            <person name="Peterson S.N."/>
            <person name="Tourasse N.J."/>
            <person name="Baillie L.W."/>
            <person name="Paulsen I.T."/>
            <person name="Nelson K.E."/>
            <person name="Tettelin H."/>
            <person name="Fouts D.E."/>
            <person name="Eisen J.A."/>
            <person name="Gill S.R."/>
            <person name="Holtzapple E.K."/>
            <person name="Okstad O.A."/>
            <person name="Helgason E."/>
            <person name="Rilstone J."/>
            <person name="Wu M."/>
            <person name="Kolonay J.F."/>
            <person name="Beanan M.J."/>
            <person name="Dodson R.J."/>
            <person name="Brinkac L.M."/>
            <person name="Gwinn M.L."/>
            <person name="DeBoy R.T."/>
            <person name="Madpu R."/>
            <person name="Daugherty S.C."/>
            <person name="Durkin A.S."/>
            <person name="Haft D.H."/>
            <person name="Nelson W.C."/>
            <person name="Peterson J.D."/>
            <person name="Pop M."/>
            <person name="Khouri H.M."/>
            <person name="Radune D."/>
            <person name="Benton J.L."/>
            <person name="Mahamoud Y."/>
            <person name="Jiang L."/>
            <person name="Hance I.R."/>
            <person name="Weidman J.F."/>
            <person name="Berry K.J."/>
            <person name="Plaut R.D."/>
            <person name="Wolf A.M."/>
            <person name="Watkins K.L."/>
            <person name="Nierman W.C."/>
            <person name="Hazen A."/>
            <person name="Cline R.T."/>
            <person name="Redmond C."/>
            <person name="Thwaite J.E."/>
            <person name="White O."/>
            <person name="Salzberg S.L."/>
            <person name="Thomason B."/>
            <person name="Friedlander A.M."/>
            <person name="Koehler T.M."/>
            <person name="Hanna P.C."/>
            <person name="Kolstoe A.-B."/>
            <person name="Fraser C.M."/>
        </authorList>
    </citation>
    <scope>NUCLEOTIDE SEQUENCE [LARGE SCALE GENOMIC DNA]</scope>
    <source>
        <strain>Ames / isolate Porton</strain>
    </source>
</reference>
<reference key="2">
    <citation type="journal article" date="2009" name="J. Bacteriol.">
        <title>The complete genome sequence of Bacillus anthracis Ames 'Ancestor'.</title>
        <authorList>
            <person name="Ravel J."/>
            <person name="Jiang L."/>
            <person name="Stanley S.T."/>
            <person name="Wilson M.R."/>
            <person name="Decker R.S."/>
            <person name="Read T.D."/>
            <person name="Worsham P."/>
            <person name="Keim P.S."/>
            <person name="Salzberg S.L."/>
            <person name="Fraser-Liggett C.M."/>
            <person name="Rasko D.A."/>
        </authorList>
    </citation>
    <scope>NUCLEOTIDE SEQUENCE [LARGE SCALE GENOMIC DNA]</scope>
    <source>
        <strain>Ames ancestor</strain>
    </source>
</reference>
<reference key="3">
    <citation type="submission" date="2004-01" db="EMBL/GenBank/DDBJ databases">
        <title>Complete genome sequence of Bacillus anthracis Sterne.</title>
        <authorList>
            <person name="Brettin T.S."/>
            <person name="Bruce D."/>
            <person name="Challacombe J.F."/>
            <person name="Gilna P."/>
            <person name="Han C."/>
            <person name="Hill K."/>
            <person name="Hitchcock P."/>
            <person name="Jackson P."/>
            <person name="Keim P."/>
            <person name="Longmire J."/>
            <person name="Lucas S."/>
            <person name="Okinaka R."/>
            <person name="Richardson P."/>
            <person name="Rubin E."/>
            <person name="Tice H."/>
        </authorList>
    </citation>
    <scope>NUCLEOTIDE SEQUENCE [LARGE SCALE GENOMIC DNA]</scope>
    <source>
        <strain>Sterne</strain>
    </source>
</reference>
<gene>
    <name evidence="1" type="primary">cysH</name>
    <name type="ordered locus">BA_1440</name>
    <name type="ordered locus">GBAA_1440</name>
    <name type="ordered locus">BAS1330</name>
</gene>
<comment type="function">
    <text evidence="1">Catalyzes the formation of sulfite from adenosine 5'-phosphosulfate (APS) using thioredoxin as an electron donor.</text>
</comment>
<comment type="catalytic activity">
    <reaction evidence="1">
        <text>[thioredoxin]-disulfide + sulfite + AMP + 2 H(+) = adenosine 5'-phosphosulfate + [thioredoxin]-dithiol</text>
        <dbReference type="Rhea" id="RHEA:21976"/>
        <dbReference type="Rhea" id="RHEA-COMP:10698"/>
        <dbReference type="Rhea" id="RHEA-COMP:10700"/>
        <dbReference type="ChEBI" id="CHEBI:15378"/>
        <dbReference type="ChEBI" id="CHEBI:17359"/>
        <dbReference type="ChEBI" id="CHEBI:29950"/>
        <dbReference type="ChEBI" id="CHEBI:50058"/>
        <dbReference type="ChEBI" id="CHEBI:58243"/>
        <dbReference type="ChEBI" id="CHEBI:456215"/>
        <dbReference type="EC" id="1.8.4.10"/>
    </reaction>
</comment>
<comment type="cofactor">
    <cofactor evidence="1">
        <name>[4Fe-4S] cluster</name>
        <dbReference type="ChEBI" id="CHEBI:49883"/>
    </cofactor>
    <text evidence="1">Binds 1 [4Fe-4S] cluster per subunit.</text>
</comment>
<comment type="pathway">
    <text evidence="1">Sulfur metabolism; hydrogen sulfide biosynthesis; sulfite from sulfate.</text>
</comment>
<comment type="subcellular location">
    <subcellularLocation>
        <location evidence="1">Cytoplasm</location>
    </subcellularLocation>
</comment>
<comment type="similarity">
    <text evidence="1">Belongs to the PAPS reductase family. CysH subfamily.</text>
</comment>
<protein>
    <recommendedName>
        <fullName evidence="1">Adenosine 5'-phosphosulfate reductase</fullName>
        <shortName evidence="1">APS reductase</shortName>
        <ecNumber evidence="1">1.8.4.10</ecNumber>
    </recommendedName>
    <alternativeName>
        <fullName evidence="1">5'-adenylylsulfate reductase</fullName>
    </alternativeName>
    <alternativeName>
        <fullName evidence="1">Thioredoxin-dependent 5'-adenylylsulfate reductase</fullName>
    </alternativeName>
</protein>
<dbReference type="EC" id="1.8.4.10" evidence="1"/>
<dbReference type="EMBL" id="AE016879">
    <property type="protein sequence ID" value="AAP25382.1"/>
    <property type="molecule type" value="Genomic_DNA"/>
</dbReference>
<dbReference type="EMBL" id="AE017334">
    <property type="protein sequence ID" value="AAT30539.1"/>
    <property type="molecule type" value="Genomic_DNA"/>
</dbReference>
<dbReference type="EMBL" id="AE017225">
    <property type="protein sequence ID" value="AAT53650.1"/>
    <property type="molecule type" value="Genomic_DNA"/>
</dbReference>
<dbReference type="RefSeq" id="NP_843896.1">
    <property type="nucleotide sequence ID" value="NC_003997.3"/>
</dbReference>
<dbReference type="RefSeq" id="WP_000958999.1">
    <property type="nucleotide sequence ID" value="NZ_WXXJ01000017.1"/>
</dbReference>
<dbReference type="RefSeq" id="YP_027599.1">
    <property type="nucleotide sequence ID" value="NC_005945.1"/>
</dbReference>
<dbReference type="SMR" id="Q81T49"/>
<dbReference type="STRING" id="261594.GBAA_1440"/>
<dbReference type="DNASU" id="1086013"/>
<dbReference type="GeneID" id="45021420"/>
<dbReference type="KEGG" id="ban:BA_1440"/>
<dbReference type="KEGG" id="bar:GBAA_1440"/>
<dbReference type="KEGG" id="bat:BAS1330"/>
<dbReference type="PATRIC" id="fig|198094.11.peg.1414"/>
<dbReference type="eggNOG" id="COG0175">
    <property type="taxonomic scope" value="Bacteria"/>
</dbReference>
<dbReference type="HOGENOM" id="CLU_044089_2_1_9"/>
<dbReference type="OMA" id="PIARWTQ"/>
<dbReference type="OrthoDB" id="9772604at2"/>
<dbReference type="Proteomes" id="UP000000427">
    <property type="component" value="Chromosome"/>
</dbReference>
<dbReference type="Proteomes" id="UP000000594">
    <property type="component" value="Chromosome"/>
</dbReference>
<dbReference type="GO" id="GO:0005737">
    <property type="term" value="C:cytoplasm"/>
    <property type="evidence" value="ECO:0007669"/>
    <property type="project" value="UniProtKB-SubCell"/>
</dbReference>
<dbReference type="GO" id="GO:0051539">
    <property type="term" value="F:4 iron, 4 sulfur cluster binding"/>
    <property type="evidence" value="ECO:0007669"/>
    <property type="project" value="UniProtKB-UniRule"/>
</dbReference>
<dbReference type="GO" id="GO:0043866">
    <property type="term" value="F:adenylyl-sulfate reductase (thioredoxin) activity"/>
    <property type="evidence" value="ECO:0007669"/>
    <property type="project" value="UniProtKB-EC"/>
</dbReference>
<dbReference type="GO" id="GO:0046872">
    <property type="term" value="F:metal ion binding"/>
    <property type="evidence" value="ECO:0007669"/>
    <property type="project" value="UniProtKB-KW"/>
</dbReference>
<dbReference type="GO" id="GO:0004604">
    <property type="term" value="F:phosphoadenylyl-sulfate reductase (thioredoxin) activity"/>
    <property type="evidence" value="ECO:0007669"/>
    <property type="project" value="UniProtKB-UniRule"/>
</dbReference>
<dbReference type="GO" id="GO:0019344">
    <property type="term" value="P:cysteine biosynthetic process"/>
    <property type="evidence" value="ECO:0007669"/>
    <property type="project" value="InterPro"/>
</dbReference>
<dbReference type="GO" id="GO:0070814">
    <property type="term" value="P:hydrogen sulfide biosynthetic process"/>
    <property type="evidence" value="ECO:0007669"/>
    <property type="project" value="UniProtKB-UniRule"/>
</dbReference>
<dbReference type="GO" id="GO:0019379">
    <property type="term" value="P:sulfate assimilation, phosphoadenylyl sulfate reduction by phosphoadenylyl-sulfate reductase (thioredoxin)"/>
    <property type="evidence" value="ECO:0007669"/>
    <property type="project" value="UniProtKB-UniRule"/>
</dbReference>
<dbReference type="CDD" id="cd23945">
    <property type="entry name" value="PAPS_reductase"/>
    <property type="match status" value="1"/>
</dbReference>
<dbReference type="FunFam" id="3.40.50.620:FF:000095">
    <property type="entry name" value="Phosphoadenosine phosphosulfate reductase"/>
    <property type="match status" value="1"/>
</dbReference>
<dbReference type="Gene3D" id="3.40.50.620">
    <property type="entry name" value="HUPs"/>
    <property type="match status" value="1"/>
</dbReference>
<dbReference type="HAMAP" id="MF_00063">
    <property type="entry name" value="CysH"/>
    <property type="match status" value="1"/>
</dbReference>
<dbReference type="InterPro" id="IPR011798">
    <property type="entry name" value="APS_reductase"/>
</dbReference>
<dbReference type="InterPro" id="IPR004511">
    <property type="entry name" value="PAPS/APS_Rdtase"/>
</dbReference>
<dbReference type="InterPro" id="IPR002500">
    <property type="entry name" value="PAPS_reduct_dom"/>
</dbReference>
<dbReference type="InterPro" id="IPR014729">
    <property type="entry name" value="Rossmann-like_a/b/a_fold"/>
</dbReference>
<dbReference type="NCBIfam" id="TIGR02055">
    <property type="entry name" value="APS_reductase"/>
    <property type="match status" value="1"/>
</dbReference>
<dbReference type="NCBIfam" id="TIGR00434">
    <property type="entry name" value="cysH"/>
    <property type="match status" value="1"/>
</dbReference>
<dbReference type="NCBIfam" id="NF002537">
    <property type="entry name" value="PRK02090.1"/>
    <property type="match status" value="1"/>
</dbReference>
<dbReference type="PANTHER" id="PTHR46509">
    <property type="entry name" value="PHOSPHOADENOSINE PHOSPHOSULFATE REDUCTASE"/>
    <property type="match status" value="1"/>
</dbReference>
<dbReference type="PANTHER" id="PTHR46509:SF1">
    <property type="entry name" value="PHOSPHOADENOSINE PHOSPHOSULFATE REDUCTASE"/>
    <property type="match status" value="1"/>
</dbReference>
<dbReference type="Pfam" id="PF01507">
    <property type="entry name" value="PAPS_reduct"/>
    <property type="match status" value="1"/>
</dbReference>
<dbReference type="PIRSF" id="PIRSF000857">
    <property type="entry name" value="PAPS_reductase"/>
    <property type="match status" value="1"/>
</dbReference>
<dbReference type="SUPFAM" id="SSF52402">
    <property type="entry name" value="Adenine nucleotide alpha hydrolases-like"/>
    <property type="match status" value="1"/>
</dbReference>
<name>CYSH_BACAN</name>
<evidence type="ECO:0000255" key="1">
    <source>
        <dbReference type="HAMAP-Rule" id="MF_00063"/>
    </source>
</evidence>
<sequence>MLTYETWEENETKGALSVLSWAYKEYKSEIVYACSFGVEGMVLLDLINQVNPSAKVVFLDTNVHFQETYELIQKVRERFPSLNIIEKQPKLTLDEQDKLHGDKLWESNPNLCCKIRKILPLEESLANEKAWISGLRREQSETRKHTKFINQDHRFQSIKVCPLIHWTWKEVWRYVYKHSLPYNSLHDIGYPSIGCEKCTLPVGEGGDSRDGRWAGKVKTECGLHYQ</sequence>
<accession>Q81T49</accession>
<accession>Q6I1D2</accession>
<accession>Q6KV78</accession>
<organism>
    <name type="scientific">Bacillus anthracis</name>
    <dbReference type="NCBI Taxonomy" id="1392"/>
    <lineage>
        <taxon>Bacteria</taxon>
        <taxon>Bacillati</taxon>
        <taxon>Bacillota</taxon>
        <taxon>Bacilli</taxon>
        <taxon>Bacillales</taxon>
        <taxon>Bacillaceae</taxon>
        <taxon>Bacillus</taxon>
        <taxon>Bacillus cereus group</taxon>
    </lineage>
</organism>
<keyword id="KW-0963">Cytoplasm</keyword>
<keyword id="KW-0408">Iron</keyword>
<keyword id="KW-0411">Iron-sulfur</keyword>
<keyword id="KW-0479">Metal-binding</keyword>
<keyword id="KW-0560">Oxidoreductase</keyword>
<keyword id="KW-1185">Reference proteome</keyword>
<feature type="chain" id="PRO_0000100623" description="Adenosine 5'-phosphosulfate reductase">
    <location>
        <begin position="1"/>
        <end position="226"/>
    </location>
</feature>
<feature type="active site" description="Nucleophile; cysteine thiosulfonate intermediate" evidence="1">
    <location>
        <position position="221"/>
    </location>
</feature>
<feature type="binding site" evidence="1">
    <location>
        <position position="112"/>
    </location>
    <ligand>
        <name>[4Fe-4S] cluster</name>
        <dbReference type="ChEBI" id="CHEBI:49883"/>
    </ligand>
</feature>
<feature type="binding site" evidence="1">
    <location>
        <position position="113"/>
    </location>
    <ligand>
        <name>[4Fe-4S] cluster</name>
        <dbReference type="ChEBI" id="CHEBI:49883"/>
    </ligand>
</feature>
<feature type="binding site" evidence="1">
    <location>
        <position position="195"/>
    </location>
    <ligand>
        <name>[4Fe-4S] cluster</name>
        <dbReference type="ChEBI" id="CHEBI:49883"/>
    </ligand>
</feature>
<feature type="binding site" evidence="1">
    <location>
        <position position="198"/>
    </location>
    <ligand>
        <name>[4Fe-4S] cluster</name>
        <dbReference type="ChEBI" id="CHEBI:49883"/>
    </ligand>
</feature>
<proteinExistence type="inferred from homology"/>